<proteinExistence type="inferred from homology"/>
<accession>C0Q7X4</accession>
<gene>
    <name evidence="1" type="primary">clpX</name>
    <name type="ordered locus">SPC_0463</name>
</gene>
<sequence length="423" mass="46176">MTDKRKDGSGKLLYCSFCGKSQHEVRKLIAGPSVYICDECVDLCNDIIREEIKEVAPHRERSALPTPHEIRTHLDDYVIGQEQAKKVLAVAVYNHYKRLRNGDTSNGVELGKSNILLIGPTGSGKTLLAETLARLLDVPFTMADATTLTEAGYVGEDVENIIQKLLQKCDYDVQKAQRGIVYIDEIDKISRKSDNPSITRDVSGEGVQQALLKLIEGTVAAVPPQGGRKHPQQEFLQVDTSKILFICGGAFAGLDKVIANRVETGSGIGFGATVKAKSDKASEGELLSQVEPEDLIKFGLIPEFIGRLPVVATLNELSEEALIQILKEPKNALTKQYQALFNLEGVDLEFRDEALDAIARKAMARKTGARGLRSIVEAALLDTMYDLPSMEDVEKVVIDESVIAGQSKPLLIYGKPEAQASGE</sequence>
<comment type="function">
    <text evidence="1">ATP-dependent specificity component of the Clp protease. It directs the protease to specific substrates. Can perform chaperone functions in the absence of ClpP.</text>
</comment>
<comment type="subunit">
    <text evidence="1">Component of the ClpX-ClpP complex. Forms a hexameric ring that, in the presence of ATP, binds to fourteen ClpP subunits assembled into a disk-like structure with a central cavity, resembling the structure of eukaryotic proteasomes.</text>
</comment>
<comment type="similarity">
    <text evidence="1">Belongs to the ClpX chaperone family.</text>
</comment>
<organism>
    <name type="scientific">Salmonella paratyphi C (strain RKS4594)</name>
    <dbReference type="NCBI Taxonomy" id="476213"/>
    <lineage>
        <taxon>Bacteria</taxon>
        <taxon>Pseudomonadati</taxon>
        <taxon>Pseudomonadota</taxon>
        <taxon>Gammaproteobacteria</taxon>
        <taxon>Enterobacterales</taxon>
        <taxon>Enterobacteriaceae</taxon>
        <taxon>Salmonella</taxon>
    </lineage>
</organism>
<name>CLPX_SALPC</name>
<evidence type="ECO:0000255" key="1">
    <source>
        <dbReference type="HAMAP-Rule" id="MF_00175"/>
    </source>
</evidence>
<evidence type="ECO:0000255" key="2">
    <source>
        <dbReference type="PROSITE-ProRule" id="PRU01250"/>
    </source>
</evidence>
<feature type="chain" id="PRO_1000123848" description="ATP-dependent Clp protease ATP-binding subunit ClpX">
    <location>
        <begin position="1"/>
        <end position="423"/>
    </location>
</feature>
<feature type="domain" description="ClpX-type ZB" evidence="2">
    <location>
        <begin position="2"/>
        <end position="56"/>
    </location>
</feature>
<feature type="binding site" evidence="2">
    <location>
        <position position="15"/>
    </location>
    <ligand>
        <name>Zn(2+)</name>
        <dbReference type="ChEBI" id="CHEBI:29105"/>
    </ligand>
</feature>
<feature type="binding site" evidence="2">
    <location>
        <position position="18"/>
    </location>
    <ligand>
        <name>Zn(2+)</name>
        <dbReference type="ChEBI" id="CHEBI:29105"/>
    </ligand>
</feature>
<feature type="binding site" evidence="2">
    <location>
        <position position="37"/>
    </location>
    <ligand>
        <name>Zn(2+)</name>
        <dbReference type="ChEBI" id="CHEBI:29105"/>
    </ligand>
</feature>
<feature type="binding site" evidence="2">
    <location>
        <position position="40"/>
    </location>
    <ligand>
        <name>Zn(2+)</name>
        <dbReference type="ChEBI" id="CHEBI:29105"/>
    </ligand>
</feature>
<feature type="binding site" evidence="1">
    <location>
        <begin position="120"/>
        <end position="127"/>
    </location>
    <ligand>
        <name>ATP</name>
        <dbReference type="ChEBI" id="CHEBI:30616"/>
    </ligand>
</feature>
<reference key="1">
    <citation type="journal article" date="2009" name="PLoS ONE">
        <title>Salmonella paratyphi C: genetic divergence from Salmonella choleraesuis and pathogenic convergence with Salmonella typhi.</title>
        <authorList>
            <person name="Liu W.-Q."/>
            <person name="Feng Y."/>
            <person name="Wang Y."/>
            <person name="Zou Q.-H."/>
            <person name="Chen F."/>
            <person name="Guo J.-T."/>
            <person name="Peng Y.-H."/>
            <person name="Jin Y."/>
            <person name="Li Y.-G."/>
            <person name="Hu S.-N."/>
            <person name="Johnston R.N."/>
            <person name="Liu G.-R."/>
            <person name="Liu S.-L."/>
        </authorList>
    </citation>
    <scope>NUCLEOTIDE SEQUENCE [LARGE SCALE GENOMIC DNA]</scope>
    <source>
        <strain>RKS4594</strain>
    </source>
</reference>
<keyword id="KW-0067">ATP-binding</keyword>
<keyword id="KW-0143">Chaperone</keyword>
<keyword id="KW-0479">Metal-binding</keyword>
<keyword id="KW-0547">Nucleotide-binding</keyword>
<keyword id="KW-0862">Zinc</keyword>
<dbReference type="EMBL" id="CP000857">
    <property type="protein sequence ID" value="ACN44644.1"/>
    <property type="molecule type" value="Genomic_DNA"/>
</dbReference>
<dbReference type="RefSeq" id="WP_000130314.1">
    <property type="nucleotide sequence ID" value="NC_012125.1"/>
</dbReference>
<dbReference type="SMR" id="C0Q7X4"/>
<dbReference type="KEGG" id="sei:SPC_0463"/>
<dbReference type="HOGENOM" id="CLU_014218_8_2_6"/>
<dbReference type="Proteomes" id="UP000001599">
    <property type="component" value="Chromosome"/>
</dbReference>
<dbReference type="GO" id="GO:0009376">
    <property type="term" value="C:HslUV protease complex"/>
    <property type="evidence" value="ECO:0007669"/>
    <property type="project" value="TreeGrafter"/>
</dbReference>
<dbReference type="GO" id="GO:0005524">
    <property type="term" value="F:ATP binding"/>
    <property type="evidence" value="ECO:0007669"/>
    <property type="project" value="UniProtKB-UniRule"/>
</dbReference>
<dbReference type="GO" id="GO:0016887">
    <property type="term" value="F:ATP hydrolysis activity"/>
    <property type="evidence" value="ECO:0007669"/>
    <property type="project" value="InterPro"/>
</dbReference>
<dbReference type="GO" id="GO:0140662">
    <property type="term" value="F:ATP-dependent protein folding chaperone"/>
    <property type="evidence" value="ECO:0007669"/>
    <property type="project" value="InterPro"/>
</dbReference>
<dbReference type="GO" id="GO:0046983">
    <property type="term" value="F:protein dimerization activity"/>
    <property type="evidence" value="ECO:0007669"/>
    <property type="project" value="InterPro"/>
</dbReference>
<dbReference type="GO" id="GO:0051082">
    <property type="term" value="F:unfolded protein binding"/>
    <property type="evidence" value="ECO:0007669"/>
    <property type="project" value="UniProtKB-UniRule"/>
</dbReference>
<dbReference type="GO" id="GO:0008270">
    <property type="term" value="F:zinc ion binding"/>
    <property type="evidence" value="ECO:0007669"/>
    <property type="project" value="InterPro"/>
</dbReference>
<dbReference type="GO" id="GO:0051301">
    <property type="term" value="P:cell division"/>
    <property type="evidence" value="ECO:0007669"/>
    <property type="project" value="TreeGrafter"/>
</dbReference>
<dbReference type="GO" id="GO:0051603">
    <property type="term" value="P:proteolysis involved in protein catabolic process"/>
    <property type="evidence" value="ECO:0007669"/>
    <property type="project" value="TreeGrafter"/>
</dbReference>
<dbReference type="CDD" id="cd19497">
    <property type="entry name" value="RecA-like_ClpX"/>
    <property type="match status" value="1"/>
</dbReference>
<dbReference type="FunFam" id="1.10.8.60:FF:000002">
    <property type="entry name" value="ATP-dependent Clp protease ATP-binding subunit ClpX"/>
    <property type="match status" value="1"/>
</dbReference>
<dbReference type="FunFam" id="3.40.50.300:FF:000005">
    <property type="entry name" value="ATP-dependent Clp protease ATP-binding subunit ClpX"/>
    <property type="match status" value="1"/>
</dbReference>
<dbReference type="Gene3D" id="1.10.8.60">
    <property type="match status" value="1"/>
</dbReference>
<dbReference type="Gene3D" id="6.20.220.10">
    <property type="entry name" value="ClpX chaperone, C4-type zinc finger domain"/>
    <property type="match status" value="1"/>
</dbReference>
<dbReference type="Gene3D" id="3.40.50.300">
    <property type="entry name" value="P-loop containing nucleotide triphosphate hydrolases"/>
    <property type="match status" value="1"/>
</dbReference>
<dbReference type="HAMAP" id="MF_00175">
    <property type="entry name" value="ClpX"/>
    <property type="match status" value="1"/>
</dbReference>
<dbReference type="InterPro" id="IPR003593">
    <property type="entry name" value="AAA+_ATPase"/>
</dbReference>
<dbReference type="InterPro" id="IPR050052">
    <property type="entry name" value="ATP-dep_Clp_protease_ClpX"/>
</dbReference>
<dbReference type="InterPro" id="IPR003959">
    <property type="entry name" value="ATPase_AAA_core"/>
</dbReference>
<dbReference type="InterPro" id="IPR019489">
    <property type="entry name" value="Clp_ATPase_C"/>
</dbReference>
<dbReference type="InterPro" id="IPR004487">
    <property type="entry name" value="Clp_protease_ATP-bd_su_ClpX"/>
</dbReference>
<dbReference type="InterPro" id="IPR046425">
    <property type="entry name" value="ClpX_bact"/>
</dbReference>
<dbReference type="InterPro" id="IPR027417">
    <property type="entry name" value="P-loop_NTPase"/>
</dbReference>
<dbReference type="InterPro" id="IPR010603">
    <property type="entry name" value="Znf_CppX_C4"/>
</dbReference>
<dbReference type="InterPro" id="IPR038366">
    <property type="entry name" value="Znf_CppX_C4_sf"/>
</dbReference>
<dbReference type="NCBIfam" id="TIGR00382">
    <property type="entry name" value="clpX"/>
    <property type="match status" value="1"/>
</dbReference>
<dbReference type="NCBIfam" id="NF003745">
    <property type="entry name" value="PRK05342.1"/>
    <property type="match status" value="1"/>
</dbReference>
<dbReference type="PANTHER" id="PTHR48102:SF7">
    <property type="entry name" value="ATP-DEPENDENT CLP PROTEASE ATP-BINDING SUBUNIT CLPX-LIKE, MITOCHONDRIAL"/>
    <property type="match status" value="1"/>
</dbReference>
<dbReference type="PANTHER" id="PTHR48102">
    <property type="entry name" value="ATP-DEPENDENT CLP PROTEASE ATP-BINDING SUBUNIT CLPX-LIKE, MITOCHONDRIAL-RELATED"/>
    <property type="match status" value="1"/>
</dbReference>
<dbReference type="Pfam" id="PF07724">
    <property type="entry name" value="AAA_2"/>
    <property type="match status" value="1"/>
</dbReference>
<dbReference type="Pfam" id="PF10431">
    <property type="entry name" value="ClpB_D2-small"/>
    <property type="match status" value="1"/>
</dbReference>
<dbReference type="Pfam" id="PF06689">
    <property type="entry name" value="zf-C4_ClpX"/>
    <property type="match status" value="1"/>
</dbReference>
<dbReference type="SMART" id="SM00382">
    <property type="entry name" value="AAA"/>
    <property type="match status" value="1"/>
</dbReference>
<dbReference type="SMART" id="SM01086">
    <property type="entry name" value="ClpB_D2-small"/>
    <property type="match status" value="1"/>
</dbReference>
<dbReference type="SMART" id="SM00994">
    <property type="entry name" value="zf-C4_ClpX"/>
    <property type="match status" value="1"/>
</dbReference>
<dbReference type="SUPFAM" id="SSF57716">
    <property type="entry name" value="Glucocorticoid receptor-like (DNA-binding domain)"/>
    <property type="match status" value="1"/>
</dbReference>
<dbReference type="SUPFAM" id="SSF52540">
    <property type="entry name" value="P-loop containing nucleoside triphosphate hydrolases"/>
    <property type="match status" value="1"/>
</dbReference>
<dbReference type="PROSITE" id="PS51902">
    <property type="entry name" value="CLPX_ZB"/>
    <property type="match status" value="1"/>
</dbReference>
<protein>
    <recommendedName>
        <fullName evidence="1">ATP-dependent Clp protease ATP-binding subunit ClpX</fullName>
    </recommendedName>
</protein>